<dbReference type="EC" id="2.1.1.-" evidence="1"/>
<dbReference type="EMBL" id="ABDG02000028">
    <property type="protein sequence ID" value="EHK40444.1"/>
    <property type="molecule type" value="Genomic_DNA"/>
</dbReference>
<dbReference type="RefSeq" id="XP_013938600.1">
    <property type="nucleotide sequence ID" value="XM_014083125.1"/>
</dbReference>
<dbReference type="SMR" id="G9P9X3"/>
<dbReference type="STRING" id="452589.G9P9X3"/>
<dbReference type="GeneID" id="25782404"/>
<dbReference type="KEGG" id="tatv:25782404"/>
<dbReference type="eggNOG" id="ENOG502QQMC">
    <property type="taxonomic scope" value="Eukaryota"/>
</dbReference>
<dbReference type="HOGENOM" id="CLU_010595_2_0_1"/>
<dbReference type="OMA" id="CDFYAPF"/>
<dbReference type="OrthoDB" id="2013972at2759"/>
<dbReference type="Proteomes" id="UP000005426">
    <property type="component" value="Unassembled WGS sequence"/>
</dbReference>
<dbReference type="GO" id="GO:0005634">
    <property type="term" value="C:nucleus"/>
    <property type="evidence" value="ECO:0007669"/>
    <property type="project" value="UniProtKB-SubCell"/>
</dbReference>
<dbReference type="GO" id="GO:0008168">
    <property type="term" value="F:methyltransferase activity"/>
    <property type="evidence" value="ECO:0007669"/>
    <property type="project" value="UniProtKB-KW"/>
</dbReference>
<dbReference type="GO" id="GO:0032259">
    <property type="term" value="P:methylation"/>
    <property type="evidence" value="ECO:0007669"/>
    <property type="project" value="UniProtKB-KW"/>
</dbReference>
<dbReference type="GO" id="GO:0030435">
    <property type="term" value="P:sporulation resulting in formation of a cellular spore"/>
    <property type="evidence" value="ECO:0007669"/>
    <property type="project" value="UniProtKB-KW"/>
</dbReference>
<dbReference type="CDD" id="cd02440">
    <property type="entry name" value="AdoMet_MTases"/>
    <property type="match status" value="1"/>
</dbReference>
<dbReference type="Gene3D" id="3.40.50.150">
    <property type="entry name" value="Vaccinia Virus protein VP39"/>
    <property type="match status" value="1"/>
</dbReference>
<dbReference type="InterPro" id="IPR029063">
    <property type="entry name" value="SAM-dependent_MTases_sf"/>
</dbReference>
<dbReference type="PANTHER" id="PTHR43591">
    <property type="entry name" value="METHYLTRANSFERASE"/>
    <property type="match status" value="1"/>
</dbReference>
<dbReference type="PANTHER" id="PTHR43591:SF30">
    <property type="entry name" value="PROTEIN-METHIONINE METHYLTRANSFERASE LAEA"/>
    <property type="match status" value="1"/>
</dbReference>
<dbReference type="Pfam" id="PF13489">
    <property type="entry name" value="Methyltransf_23"/>
    <property type="match status" value="1"/>
</dbReference>
<dbReference type="SUPFAM" id="SSF53335">
    <property type="entry name" value="S-adenosyl-L-methionine-dependent methyltransferases"/>
    <property type="match status" value="1"/>
</dbReference>
<feature type="chain" id="PRO_0000435755" description="Secondary metabolism regulator LAE1">
    <location>
        <begin position="1"/>
        <end position="349"/>
    </location>
</feature>
<feature type="region of interest" description="Disordered" evidence="2">
    <location>
        <begin position="1"/>
        <end position="46"/>
    </location>
</feature>
<feature type="compositionally biased region" description="Polar residues" evidence="2">
    <location>
        <begin position="25"/>
        <end position="38"/>
    </location>
</feature>
<evidence type="ECO:0000250" key="1">
    <source>
        <dbReference type="UniProtKB" id="C8VQG9"/>
    </source>
</evidence>
<evidence type="ECO:0000256" key="2">
    <source>
        <dbReference type="SAM" id="MobiDB-lite"/>
    </source>
</evidence>
<evidence type="ECO:0000269" key="3">
    <source>
    </source>
</evidence>
<evidence type="ECO:0000303" key="4">
    <source>
    </source>
</evidence>
<evidence type="ECO:0000305" key="5"/>
<proteinExistence type="inferred from homology"/>
<reference key="1">
    <citation type="journal article" date="2011" name="Genome Biol.">
        <title>Comparative genome sequence analysis underscores mycoparasitism as the ancestral life style of Trichoderma.</title>
        <authorList>
            <person name="Kubicek C.P."/>
            <person name="Herrera-Estrella A."/>
            <person name="Seidl-Seiboth V."/>
            <person name="Martinez D.A."/>
            <person name="Druzhinina I.S."/>
            <person name="Thon M."/>
            <person name="Zeilinger S."/>
            <person name="Casas-Flores S."/>
            <person name="Horwitz B.A."/>
            <person name="Mukherjee P.K."/>
            <person name="Mukherjee M."/>
            <person name="Kredics L."/>
            <person name="Alcaraz L.D."/>
            <person name="Aerts A."/>
            <person name="Antal Z."/>
            <person name="Atanasova L."/>
            <person name="Cervantes-Badillo M.G."/>
            <person name="Challacombe J."/>
            <person name="Chertkov O."/>
            <person name="McCluskey K."/>
            <person name="Coulpier F."/>
            <person name="Deshpande N."/>
            <person name="von Doehren H."/>
            <person name="Ebbole D.J."/>
            <person name="Esquivel-Naranjo E.U."/>
            <person name="Fekete E."/>
            <person name="Flipphi M."/>
            <person name="Glaser F."/>
            <person name="Gomez-Rodriguez E.Y."/>
            <person name="Gruber S."/>
            <person name="Han C."/>
            <person name="Henrissat B."/>
            <person name="Hermosa R."/>
            <person name="Hernandez-Onate M."/>
            <person name="Karaffa L."/>
            <person name="Kosti I."/>
            <person name="Le Crom S."/>
            <person name="Lindquist E."/>
            <person name="Lucas S."/>
            <person name="Luebeck M."/>
            <person name="Luebeck P.S."/>
            <person name="Margeot A."/>
            <person name="Metz B."/>
            <person name="Misra M."/>
            <person name="Nevalainen H."/>
            <person name="Omann M."/>
            <person name="Packer N."/>
            <person name="Perrone G."/>
            <person name="Uresti-Rivera E.E."/>
            <person name="Salamov A."/>
            <person name="Schmoll M."/>
            <person name="Seiboth B."/>
            <person name="Shapiro H."/>
            <person name="Sukno S."/>
            <person name="Tamayo-Ramos J.A."/>
            <person name="Tisch D."/>
            <person name="Wiest A."/>
            <person name="Wilkinson H.H."/>
            <person name="Zhang M."/>
            <person name="Coutinho P.M."/>
            <person name="Kenerley C.M."/>
            <person name="Monte E."/>
            <person name="Baker S.E."/>
            <person name="Grigoriev I.V."/>
        </authorList>
    </citation>
    <scope>NUCLEOTIDE SEQUENCE [LARGE SCALE GENOMIC DNA]</scope>
    <source>
        <strain>ATCC 20476 / IMI 206040</strain>
    </source>
</reference>
<reference key="2">
    <citation type="journal article" date="2013" name="PLoS ONE">
        <title>The putative protein methyltransferase LAE1 of Trichoderma atroviride is a key regulator of asexual development and mycoparasitism.</title>
        <authorList>
            <person name="Karimi Aghcheh R."/>
            <person name="Druzhinina I.S."/>
            <person name="Kubicek C.P."/>
        </authorList>
    </citation>
    <scope>DISRUPTION PHENOTYPE</scope>
    <scope>FUNCTION</scope>
</reference>
<name>LAEA_HYPAI</name>
<comment type="function">
    <text evidence="1 3">Methyltransferase that performs automethylation (By similarity). No other methyl-accepting substrate has been identified yet (By similarity). Component of the velvet transcription factor complex that acts as a global regulator for secondary metabolite gene expression (PubMed:23826217). Controls the expression of the gamma-pentyl-pyrone gene clusters (PubMed:23826217). Required for the expression of cellulase (PubMed:23826217). Regulates asexual sporulation (conidiation) by environmental stimuli such as light and/or mechanical injury (PubMed:23826217). Required for oxidative stress tolerance (PubMed:23826217). Also plays a role in defense and parasitism on other fungi (PubMed:23826217).</text>
</comment>
<comment type="catalytic activity">
    <reaction evidence="1">
        <text>L-methionyl-[protein] + S-adenosyl-L-methionine = S-methyl-L-methionyl-[protein] + S-adenosyl-L-homocysteine</text>
        <dbReference type="Rhea" id="RHEA:60560"/>
        <dbReference type="Rhea" id="RHEA-COMP:12313"/>
        <dbReference type="Rhea" id="RHEA-COMP:15592"/>
        <dbReference type="ChEBI" id="CHEBI:16044"/>
        <dbReference type="ChEBI" id="CHEBI:57856"/>
        <dbReference type="ChEBI" id="CHEBI:59789"/>
        <dbReference type="ChEBI" id="CHEBI:142742"/>
    </reaction>
    <physiologicalReaction direction="left-to-right" evidence="1">
        <dbReference type="Rhea" id="RHEA:60561"/>
    </physiologicalReaction>
</comment>
<comment type="subunit">
    <text evidence="1">Component of the heterotrimeric velvet complex composed of LAE1, VEL1 and VEL2; VEL1 acting as a bridging protein between LAE1 and VEL2 (By similarity).</text>
</comment>
<comment type="subcellular location">
    <subcellularLocation>
        <location evidence="1">Nucleus</location>
    </subcellularLocation>
</comment>
<comment type="disruption phenotype">
    <text evidence="3">Leads to reduced growth rate on plates with D-glucose or D-galactose, decreases the expression of mycoparasitism-associated genes, and impairs conidiation (PubMed:23826217).</text>
</comment>
<comment type="similarity">
    <text evidence="5">Belongs to the methyltransferase superfamily. LaeA methyltransferase family.</text>
</comment>
<organism>
    <name type="scientific">Hypocrea atroviridis (strain ATCC 20476 / IMI 206040)</name>
    <name type="common">Trichoderma atroviride</name>
    <dbReference type="NCBI Taxonomy" id="452589"/>
    <lineage>
        <taxon>Eukaryota</taxon>
        <taxon>Fungi</taxon>
        <taxon>Dikarya</taxon>
        <taxon>Ascomycota</taxon>
        <taxon>Pezizomycotina</taxon>
        <taxon>Sordariomycetes</taxon>
        <taxon>Hypocreomycetidae</taxon>
        <taxon>Hypocreales</taxon>
        <taxon>Hypocreaceae</taxon>
        <taxon>Trichoderma</taxon>
    </lineage>
</organism>
<keyword id="KW-0489">Methyltransferase</keyword>
<keyword id="KW-0539">Nucleus</keyword>
<keyword id="KW-1185">Reference proteome</keyword>
<keyword id="KW-0949">S-adenosyl-L-methionine</keyword>
<keyword id="KW-0749">Sporulation</keyword>
<keyword id="KW-0804">Transcription</keyword>
<keyword id="KW-0805">Transcription regulation</keyword>
<keyword id="KW-0808">Transferase</keyword>
<keyword id="KW-0843">Virulence</keyword>
<accession>G9P9X3</accession>
<protein>
    <recommendedName>
        <fullName evidence="5">Secondary metabolism regulator LAE1</fullName>
    </recommendedName>
    <alternativeName>
        <fullName evidence="5">Methyltransferase LAE1</fullName>
        <ecNumber evidence="1">2.1.1.-</ecNumber>
    </alternativeName>
    <alternativeName>
        <fullName evidence="5">Velvet complex subunit LAE1</fullName>
    </alternativeName>
</protein>
<sequence>MSSRNAPSGCVAPSPATAAPPSPTNLRLTVGQSGSESANEPGGEPEERILQDGFWEYGRFYGNWKKGKYNFPIDKEETSRLDILHKYFIVETEDRVTSVPLDKEGSPKIMDLGTGTGIWAFHVVEGYIPNAQIMAVDLNQIQPALIPRGVTTKQFDLEEPSWEPLLRDCDLIHLRLLYGSIRDDLWADTYRKIFEHLAPGGYVEHLEIDWTPQWDGEDHPTHSAIREWSQQFHRAMHRYRRSVKVSSEDTKRMMEAAGFTEFKETKIRCYLNPWSTDRHQREAARWFNLALGLGLEAMSLMPMIDMLHMKQEDVVDLCKRVKAETCVLRYHAYFTLHTWTAKKPASPPQ</sequence>
<gene>
    <name evidence="4" type="primary">LAE1</name>
    <name type="ORF">TRIATDRAFT_302782</name>
</gene>